<organism>
    <name type="scientific">Polaromonas sp. (strain JS666 / ATCC BAA-500)</name>
    <dbReference type="NCBI Taxonomy" id="296591"/>
    <lineage>
        <taxon>Bacteria</taxon>
        <taxon>Pseudomonadati</taxon>
        <taxon>Pseudomonadota</taxon>
        <taxon>Betaproteobacteria</taxon>
        <taxon>Burkholderiales</taxon>
        <taxon>Comamonadaceae</taxon>
        <taxon>Polaromonas</taxon>
    </lineage>
</organism>
<reference key="1">
    <citation type="journal article" date="2008" name="Appl. Environ. Microbiol.">
        <title>The genome of Polaromonas sp. strain JS666: insights into the evolution of a hydrocarbon- and xenobiotic-degrading bacterium, and features of relevance to biotechnology.</title>
        <authorList>
            <person name="Mattes T.E."/>
            <person name="Alexander A.K."/>
            <person name="Richardson P.M."/>
            <person name="Munk A.C."/>
            <person name="Han C.S."/>
            <person name="Stothard P."/>
            <person name="Coleman N.V."/>
        </authorList>
    </citation>
    <scope>NUCLEOTIDE SEQUENCE [LARGE SCALE GENOMIC DNA]</scope>
    <source>
        <strain>JS666 / ATCC BAA-500</strain>
    </source>
</reference>
<feature type="chain" id="PRO_0000267910" description="Large ribosomal subunit protein bL17">
    <location>
        <begin position="1"/>
        <end position="132"/>
    </location>
</feature>
<keyword id="KW-1185">Reference proteome</keyword>
<keyword id="KW-0687">Ribonucleoprotein</keyword>
<keyword id="KW-0689">Ribosomal protein</keyword>
<protein>
    <recommendedName>
        <fullName evidence="1">Large ribosomal subunit protein bL17</fullName>
    </recommendedName>
    <alternativeName>
        <fullName evidence="2">50S ribosomal protein L17</fullName>
    </alternativeName>
</protein>
<accession>Q12G76</accession>
<evidence type="ECO:0000255" key="1">
    <source>
        <dbReference type="HAMAP-Rule" id="MF_01368"/>
    </source>
</evidence>
<evidence type="ECO:0000305" key="2"/>
<name>RL17_POLSJ</name>
<comment type="subunit">
    <text evidence="1">Part of the 50S ribosomal subunit. Contacts protein L32.</text>
</comment>
<comment type="similarity">
    <text evidence="1">Belongs to the bacterial ribosomal protein bL17 family.</text>
</comment>
<gene>
    <name evidence="1" type="primary">rplQ</name>
    <name type="ordered locus">Bpro_0502</name>
</gene>
<dbReference type="EMBL" id="CP000316">
    <property type="protein sequence ID" value="ABE42466.1"/>
    <property type="molecule type" value="Genomic_DNA"/>
</dbReference>
<dbReference type="RefSeq" id="WP_011481469.1">
    <property type="nucleotide sequence ID" value="NC_007948.1"/>
</dbReference>
<dbReference type="SMR" id="Q12G76"/>
<dbReference type="STRING" id="296591.Bpro_0502"/>
<dbReference type="KEGG" id="pol:Bpro_0502"/>
<dbReference type="eggNOG" id="COG0203">
    <property type="taxonomic scope" value="Bacteria"/>
</dbReference>
<dbReference type="HOGENOM" id="CLU_074407_2_0_4"/>
<dbReference type="OrthoDB" id="9809073at2"/>
<dbReference type="Proteomes" id="UP000001983">
    <property type="component" value="Chromosome"/>
</dbReference>
<dbReference type="GO" id="GO:0022625">
    <property type="term" value="C:cytosolic large ribosomal subunit"/>
    <property type="evidence" value="ECO:0007669"/>
    <property type="project" value="TreeGrafter"/>
</dbReference>
<dbReference type="GO" id="GO:0003735">
    <property type="term" value="F:structural constituent of ribosome"/>
    <property type="evidence" value="ECO:0007669"/>
    <property type="project" value="InterPro"/>
</dbReference>
<dbReference type="GO" id="GO:0006412">
    <property type="term" value="P:translation"/>
    <property type="evidence" value="ECO:0007669"/>
    <property type="project" value="UniProtKB-UniRule"/>
</dbReference>
<dbReference type="FunFam" id="3.90.1030.10:FF:000001">
    <property type="entry name" value="50S ribosomal protein L17"/>
    <property type="match status" value="1"/>
</dbReference>
<dbReference type="Gene3D" id="3.90.1030.10">
    <property type="entry name" value="Ribosomal protein L17"/>
    <property type="match status" value="1"/>
</dbReference>
<dbReference type="HAMAP" id="MF_01368">
    <property type="entry name" value="Ribosomal_bL17"/>
    <property type="match status" value="1"/>
</dbReference>
<dbReference type="InterPro" id="IPR000456">
    <property type="entry name" value="Ribosomal_bL17"/>
</dbReference>
<dbReference type="InterPro" id="IPR047859">
    <property type="entry name" value="Ribosomal_bL17_CS"/>
</dbReference>
<dbReference type="InterPro" id="IPR036373">
    <property type="entry name" value="Ribosomal_bL17_sf"/>
</dbReference>
<dbReference type="NCBIfam" id="TIGR00059">
    <property type="entry name" value="L17"/>
    <property type="match status" value="1"/>
</dbReference>
<dbReference type="PANTHER" id="PTHR14413:SF16">
    <property type="entry name" value="LARGE RIBOSOMAL SUBUNIT PROTEIN BL17M"/>
    <property type="match status" value="1"/>
</dbReference>
<dbReference type="PANTHER" id="PTHR14413">
    <property type="entry name" value="RIBOSOMAL PROTEIN L17"/>
    <property type="match status" value="1"/>
</dbReference>
<dbReference type="Pfam" id="PF01196">
    <property type="entry name" value="Ribosomal_L17"/>
    <property type="match status" value="1"/>
</dbReference>
<dbReference type="SUPFAM" id="SSF64263">
    <property type="entry name" value="Prokaryotic ribosomal protein L17"/>
    <property type="match status" value="1"/>
</dbReference>
<dbReference type="PROSITE" id="PS01167">
    <property type="entry name" value="RIBOSOMAL_L17"/>
    <property type="match status" value="1"/>
</dbReference>
<proteinExistence type="inferred from homology"/>
<sequence>MRHGHGLRKLNRTSEHRLAMLRNMMNSLLQHEVIKTTLPKAKELRRVVEPMITLAKEPTVANKRLAFDRLRDRDMVVKLFAELGPRYKARPGGYTRILKMGFRVGDNAPMALVELVDRPEIEDTTADAAKAE</sequence>